<dbReference type="EC" id="2.3.1.16" evidence="1"/>
<dbReference type="EMBL" id="AE014299">
    <property type="protein sequence ID" value="AAN53107.1"/>
    <property type="molecule type" value="Genomic_DNA"/>
</dbReference>
<dbReference type="RefSeq" id="NP_715662.1">
    <property type="nucleotide sequence ID" value="NC_004347.2"/>
</dbReference>
<dbReference type="RefSeq" id="WP_011070436.1">
    <property type="nucleotide sequence ID" value="NC_004347.2"/>
</dbReference>
<dbReference type="SMR" id="Q8EKS0"/>
<dbReference type="STRING" id="211586.SO_0020"/>
<dbReference type="PaxDb" id="211586-SO_0020"/>
<dbReference type="KEGG" id="son:SO_0020"/>
<dbReference type="PATRIC" id="fig|211586.12.peg.20"/>
<dbReference type="eggNOG" id="COG0183">
    <property type="taxonomic scope" value="Bacteria"/>
</dbReference>
<dbReference type="HOGENOM" id="CLU_031026_2_3_6"/>
<dbReference type="OrthoDB" id="8951704at2"/>
<dbReference type="PhylomeDB" id="Q8EKS0"/>
<dbReference type="BioCyc" id="SONE211586:G1GMP-20-MONOMER"/>
<dbReference type="UniPathway" id="UPA00659"/>
<dbReference type="Proteomes" id="UP000008186">
    <property type="component" value="Chromosome"/>
</dbReference>
<dbReference type="GO" id="GO:0005737">
    <property type="term" value="C:cytoplasm"/>
    <property type="evidence" value="ECO:0007669"/>
    <property type="project" value="UniProtKB-SubCell"/>
</dbReference>
<dbReference type="GO" id="GO:0003988">
    <property type="term" value="F:acetyl-CoA C-acyltransferase activity"/>
    <property type="evidence" value="ECO:0000318"/>
    <property type="project" value="GO_Central"/>
</dbReference>
<dbReference type="GO" id="GO:0006635">
    <property type="term" value="P:fatty acid beta-oxidation"/>
    <property type="evidence" value="ECO:0000318"/>
    <property type="project" value="GO_Central"/>
</dbReference>
<dbReference type="GO" id="GO:0010124">
    <property type="term" value="P:phenylacetate catabolic process"/>
    <property type="evidence" value="ECO:0000318"/>
    <property type="project" value="GO_Central"/>
</dbReference>
<dbReference type="CDD" id="cd00751">
    <property type="entry name" value="thiolase"/>
    <property type="match status" value="1"/>
</dbReference>
<dbReference type="FunFam" id="3.40.47.10:FF:000010">
    <property type="entry name" value="Acetyl-CoA acetyltransferase (Thiolase)"/>
    <property type="match status" value="1"/>
</dbReference>
<dbReference type="Gene3D" id="3.40.47.10">
    <property type="match status" value="2"/>
</dbReference>
<dbReference type="HAMAP" id="MF_01620">
    <property type="entry name" value="FadA"/>
    <property type="match status" value="1"/>
</dbReference>
<dbReference type="InterPro" id="IPR012805">
    <property type="entry name" value="FadA"/>
</dbReference>
<dbReference type="InterPro" id="IPR002155">
    <property type="entry name" value="Thiolase"/>
</dbReference>
<dbReference type="InterPro" id="IPR016039">
    <property type="entry name" value="Thiolase-like"/>
</dbReference>
<dbReference type="InterPro" id="IPR050215">
    <property type="entry name" value="Thiolase-like_sf_Thiolase"/>
</dbReference>
<dbReference type="InterPro" id="IPR020615">
    <property type="entry name" value="Thiolase_acyl_enz_int_AS"/>
</dbReference>
<dbReference type="InterPro" id="IPR020610">
    <property type="entry name" value="Thiolase_AS"/>
</dbReference>
<dbReference type="InterPro" id="IPR020617">
    <property type="entry name" value="Thiolase_C"/>
</dbReference>
<dbReference type="InterPro" id="IPR020613">
    <property type="entry name" value="Thiolase_CS"/>
</dbReference>
<dbReference type="InterPro" id="IPR020616">
    <property type="entry name" value="Thiolase_N"/>
</dbReference>
<dbReference type="NCBIfam" id="TIGR01930">
    <property type="entry name" value="AcCoA-C-Actrans"/>
    <property type="match status" value="1"/>
</dbReference>
<dbReference type="NCBIfam" id="TIGR02445">
    <property type="entry name" value="fadA"/>
    <property type="match status" value="1"/>
</dbReference>
<dbReference type="NCBIfam" id="NF006510">
    <property type="entry name" value="PRK08947.1"/>
    <property type="match status" value="1"/>
</dbReference>
<dbReference type="PANTHER" id="PTHR43853:SF11">
    <property type="entry name" value="3-KETOACYL-COA THIOLASE FADA"/>
    <property type="match status" value="1"/>
</dbReference>
<dbReference type="PANTHER" id="PTHR43853">
    <property type="entry name" value="3-KETOACYL-COA THIOLASE, PEROXISOMAL"/>
    <property type="match status" value="1"/>
</dbReference>
<dbReference type="Pfam" id="PF02803">
    <property type="entry name" value="Thiolase_C"/>
    <property type="match status" value="1"/>
</dbReference>
<dbReference type="Pfam" id="PF00108">
    <property type="entry name" value="Thiolase_N"/>
    <property type="match status" value="1"/>
</dbReference>
<dbReference type="PIRSF" id="PIRSF000429">
    <property type="entry name" value="Ac-CoA_Ac_transf"/>
    <property type="match status" value="1"/>
</dbReference>
<dbReference type="SUPFAM" id="SSF53901">
    <property type="entry name" value="Thiolase-like"/>
    <property type="match status" value="2"/>
</dbReference>
<dbReference type="PROSITE" id="PS00098">
    <property type="entry name" value="THIOLASE_1"/>
    <property type="match status" value="1"/>
</dbReference>
<dbReference type="PROSITE" id="PS00737">
    <property type="entry name" value="THIOLASE_2"/>
    <property type="match status" value="1"/>
</dbReference>
<dbReference type="PROSITE" id="PS00099">
    <property type="entry name" value="THIOLASE_3"/>
    <property type="match status" value="1"/>
</dbReference>
<comment type="function">
    <text evidence="1">Catalyzes the final step of fatty acid oxidation in which acetyl-CoA is released and the CoA ester of a fatty acid two carbons shorter is formed.</text>
</comment>
<comment type="catalytic activity">
    <reaction evidence="1">
        <text>an acyl-CoA + acetyl-CoA = a 3-oxoacyl-CoA + CoA</text>
        <dbReference type="Rhea" id="RHEA:21564"/>
        <dbReference type="ChEBI" id="CHEBI:57287"/>
        <dbReference type="ChEBI" id="CHEBI:57288"/>
        <dbReference type="ChEBI" id="CHEBI:58342"/>
        <dbReference type="ChEBI" id="CHEBI:90726"/>
        <dbReference type="EC" id="2.3.1.16"/>
    </reaction>
</comment>
<comment type="pathway">
    <text evidence="1">Lipid metabolism; fatty acid beta-oxidation.</text>
</comment>
<comment type="subunit">
    <text evidence="1">Heterotetramer of two alpha chains (FadB) and two beta chains (FadA).</text>
</comment>
<comment type="subcellular location">
    <subcellularLocation>
        <location evidence="1">Cytoplasm</location>
    </subcellularLocation>
</comment>
<comment type="similarity">
    <text evidence="1">Belongs to the thiolase-like superfamily. Thiolase family.</text>
</comment>
<keyword id="KW-0012">Acyltransferase</keyword>
<keyword id="KW-0963">Cytoplasm</keyword>
<keyword id="KW-0276">Fatty acid metabolism</keyword>
<keyword id="KW-0442">Lipid degradation</keyword>
<keyword id="KW-0443">Lipid metabolism</keyword>
<keyword id="KW-1185">Reference proteome</keyword>
<keyword id="KW-0808">Transferase</keyword>
<sequence>MKQAVIVDCIRTPMGRSKAGVFRNVRAETLSAELMKGLLLRNPQLDPNTIEDVIWGCVQQTLEQGFNIARNASLLAGIPKTAGAVTVNRLCGSSMEAIHQAARAIMTGMGDTFIIGGVEHMGHVPMNHGVDFHPGLANNVAKASGMMGLTAEMLGKLHGITREQQDAFAVRSHQRAYAATIEGRFAKEIYGIEGHDATGALIKVLQDEVIRPETTMESLAVLRPVFDPVNGTVTAGTSSALSDGASAMLIMEESKARALGLPIRARIRSMAVAGCDAAIMGYGPVPATQKALARAGITVNDLDVIELNEAFAAQSLPCVKDLGLLDVVDEKINLNGGAIALGHPLGCSGARISTTLINLMEHKDATLGLATMCIGLGQGIATVFERV</sequence>
<accession>Q8EKS0</accession>
<gene>
    <name evidence="1" type="primary">fadA</name>
    <name type="ordered locus">SO_0020</name>
</gene>
<name>FADA_SHEON</name>
<protein>
    <recommendedName>
        <fullName evidence="1">3-ketoacyl-CoA thiolase</fullName>
        <ecNumber evidence="1">2.3.1.16</ecNumber>
    </recommendedName>
    <alternativeName>
        <fullName evidence="1">Acetyl-CoA acyltransferase</fullName>
    </alternativeName>
    <alternativeName>
        <fullName evidence="1">Beta-ketothiolase</fullName>
    </alternativeName>
    <alternativeName>
        <fullName evidence="1">Fatty acid oxidation complex subunit beta</fullName>
    </alternativeName>
</protein>
<reference key="1">
    <citation type="journal article" date="2002" name="Nat. Biotechnol.">
        <title>Genome sequence of the dissimilatory metal ion-reducing bacterium Shewanella oneidensis.</title>
        <authorList>
            <person name="Heidelberg J.F."/>
            <person name="Paulsen I.T."/>
            <person name="Nelson K.E."/>
            <person name="Gaidos E.J."/>
            <person name="Nelson W.C."/>
            <person name="Read T.D."/>
            <person name="Eisen J.A."/>
            <person name="Seshadri R."/>
            <person name="Ward N.L."/>
            <person name="Methe B.A."/>
            <person name="Clayton R.A."/>
            <person name="Meyer T."/>
            <person name="Tsapin A."/>
            <person name="Scott J."/>
            <person name="Beanan M.J."/>
            <person name="Brinkac L.M."/>
            <person name="Daugherty S.C."/>
            <person name="DeBoy R.T."/>
            <person name="Dodson R.J."/>
            <person name="Durkin A.S."/>
            <person name="Haft D.H."/>
            <person name="Kolonay J.F."/>
            <person name="Madupu R."/>
            <person name="Peterson J.D."/>
            <person name="Umayam L.A."/>
            <person name="White O."/>
            <person name="Wolf A.M."/>
            <person name="Vamathevan J.J."/>
            <person name="Weidman J.F."/>
            <person name="Impraim M."/>
            <person name="Lee K."/>
            <person name="Berry K.J."/>
            <person name="Lee C."/>
            <person name="Mueller J."/>
            <person name="Khouri H.M."/>
            <person name="Gill J."/>
            <person name="Utterback T.R."/>
            <person name="McDonald L.A."/>
            <person name="Feldblyum T.V."/>
            <person name="Smith H.O."/>
            <person name="Venter J.C."/>
            <person name="Nealson K.H."/>
            <person name="Fraser C.M."/>
        </authorList>
    </citation>
    <scope>NUCLEOTIDE SEQUENCE [LARGE SCALE GENOMIC DNA]</scope>
    <source>
        <strain>ATCC 700550 / JCM 31522 / CIP 106686 / LMG 19005 / NCIMB 14063 / MR-1</strain>
    </source>
</reference>
<proteinExistence type="inferred from homology"/>
<feature type="chain" id="PRO_0000206392" description="3-ketoacyl-CoA thiolase">
    <location>
        <begin position="1"/>
        <end position="387"/>
    </location>
</feature>
<feature type="active site" description="Acyl-thioester intermediate" evidence="1">
    <location>
        <position position="91"/>
    </location>
</feature>
<feature type="active site" description="Proton acceptor" evidence="1">
    <location>
        <position position="343"/>
    </location>
</feature>
<feature type="active site" description="Proton acceptor" evidence="1">
    <location>
        <position position="373"/>
    </location>
</feature>
<organism>
    <name type="scientific">Shewanella oneidensis (strain ATCC 700550 / JCM 31522 / CIP 106686 / LMG 19005 / NCIMB 14063 / MR-1)</name>
    <dbReference type="NCBI Taxonomy" id="211586"/>
    <lineage>
        <taxon>Bacteria</taxon>
        <taxon>Pseudomonadati</taxon>
        <taxon>Pseudomonadota</taxon>
        <taxon>Gammaproteobacteria</taxon>
        <taxon>Alteromonadales</taxon>
        <taxon>Shewanellaceae</taxon>
        <taxon>Shewanella</taxon>
    </lineage>
</organism>
<evidence type="ECO:0000255" key="1">
    <source>
        <dbReference type="HAMAP-Rule" id="MF_01620"/>
    </source>
</evidence>